<gene>
    <name type="ORF">GJ15767</name>
</gene>
<organism>
    <name type="scientific">Drosophila virilis</name>
    <name type="common">Fruit fly</name>
    <dbReference type="NCBI Taxonomy" id="7244"/>
    <lineage>
        <taxon>Eukaryota</taxon>
        <taxon>Metazoa</taxon>
        <taxon>Ecdysozoa</taxon>
        <taxon>Arthropoda</taxon>
        <taxon>Hexapoda</taxon>
        <taxon>Insecta</taxon>
        <taxon>Pterygota</taxon>
        <taxon>Neoptera</taxon>
        <taxon>Endopterygota</taxon>
        <taxon>Diptera</taxon>
        <taxon>Brachycera</taxon>
        <taxon>Muscomorpha</taxon>
        <taxon>Ephydroidea</taxon>
        <taxon>Drosophilidae</taxon>
        <taxon>Drosophila</taxon>
    </lineage>
</organism>
<name>UBE2S_DROVI</name>
<evidence type="ECO:0000255" key="1">
    <source>
        <dbReference type="PROSITE-ProRule" id="PRU00388"/>
    </source>
</evidence>
<evidence type="ECO:0000255" key="2">
    <source>
        <dbReference type="PROSITE-ProRule" id="PRU10133"/>
    </source>
</evidence>
<evidence type="ECO:0000256" key="3">
    <source>
        <dbReference type="SAM" id="MobiDB-lite"/>
    </source>
</evidence>
<dbReference type="EC" id="2.3.2.23"/>
<dbReference type="EMBL" id="CH940655">
    <property type="protein sequence ID" value="EDW66061.1"/>
    <property type="molecule type" value="Genomic_DNA"/>
</dbReference>
<dbReference type="SMR" id="B4MA02"/>
<dbReference type="FunCoup" id="B4MA02">
    <property type="interactions" value="1933"/>
</dbReference>
<dbReference type="STRING" id="7244.B4MA02"/>
<dbReference type="EnsemblMetazoa" id="FBtr0231692">
    <property type="protein sequence ID" value="FBpp0230184"/>
    <property type="gene ID" value="FBgn0202955"/>
</dbReference>
<dbReference type="EnsemblMetazoa" id="XM_002057917.3">
    <property type="protein sequence ID" value="XP_002057953.1"/>
    <property type="gene ID" value="LOC6634465"/>
</dbReference>
<dbReference type="GeneID" id="6634465"/>
<dbReference type="KEGG" id="dvi:6634465"/>
<dbReference type="eggNOG" id="KOG0423">
    <property type="taxonomic scope" value="Eukaryota"/>
</dbReference>
<dbReference type="HOGENOM" id="CLU_030988_5_3_1"/>
<dbReference type="InParanoid" id="B4MA02"/>
<dbReference type="OMA" id="QPAKCGA"/>
<dbReference type="OrthoDB" id="10069349at2759"/>
<dbReference type="PhylomeDB" id="B4MA02"/>
<dbReference type="UniPathway" id="UPA00143"/>
<dbReference type="Proteomes" id="UP000008792">
    <property type="component" value="Unassembled WGS sequence"/>
</dbReference>
<dbReference type="GO" id="GO:0005524">
    <property type="term" value="F:ATP binding"/>
    <property type="evidence" value="ECO:0007669"/>
    <property type="project" value="UniProtKB-KW"/>
</dbReference>
<dbReference type="GO" id="GO:0061631">
    <property type="term" value="F:ubiquitin conjugating enzyme activity"/>
    <property type="evidence" value="ECO:0007669"/>
    <property type="project" value="UniProtKB-EC"/>
</dbReference>
<dbReference type="GO" id="GO:0031145">
    <property type="term" value="P:anaphase-promoting complex-dependent catabolic process"/>
    <property type="evidence" value="ECO:0000250"/>
    <property type="project" value="UniProtKB"/>
</dbReference>
<dbReference type="GO" id="GO:0051301">
    <property type="term" value="P:cell division"/>
    <property type="evidence" value="ECO:0007669"/>
    <property type="project" value="UniProtKB-KW"/>
</dbReference>
<dbReference type="GO" id="GO:0010458">
    <property type="term" value="P:exit from mitosis"/>
    <property type="evidence" value="ECO:0000250"/>
    <property type="project" value="UniProtKB"/>
</dbReference>
<dbReference type="GO" id="GO:0016567">
    <property type="term" value="P:protein ubiquitination"/>
    <property type="evidence" value="ECO:0007669"/>
    <property type="project" value="UniProtKB-UniPathway"/>
</dbReference>
<dbReference type="CDD" id="cd23804">
    <property type="entry name" value="UBCc_UBE2S"/>
    <property type="match status" value="1"/>
</dbReference>
<dbReference type="FunFam" id="3.10.110.10:FF:000034">
    <property type="entry name" value="Ubiquitin-conjugating enzyme E2 S"/>
    <property type="match status" value="1"/>
</dbReference>
<dbReference type="Gene3D" id="3.10.110.10">
    <property type="entry name" value="Ubiquitin Conjugating Enzyme"/>
    <property type="match status" value="1"/>
</dbReference>
<dbReference type="InterPro" id="IPR050113">
    <property type="entry name" value="Ub_conjugating_enzyme"/>
</dbReference>
<dbReference type="InterPro" id="IPR000608">
    <property type="entry name" value="UBQ-conjugat_E2_core"/>
</dbReference>
<dbReference type="InterPro" id="IPR023313">
    <property type="entry name" value="UBQ-conjugating_AS"/>
</dbReference>
<dbReference type="InterPro" id="IPR016135">
    <property type="entry name" value="UBQ-conjugating_enzyme/RWD"/>
</dbReference>
<dbReference type="PANTHER" id="PTHR24067">
    <property type="entry name" value="UBIQUITIN-CONJUGATING ENZYME E2"/>
    <property type="match status" value="1"/>
</dbReference>
<dbReference type="Pfam" id="PF00179">
    <property type="entry name" value="UQ_con"/>
    <property type="match status" value="1"/>
</dbReference>
<dbReference type="SMART" id="SM00212">
    <property type="entry name" value="UBCc"/>
    <property type="match status" value="1"/>
</dbReference>
<dbReference type="SUPFAM" id="SSF54495">
    <property type="entry name" value="UBC-like"/>
    <property type="match status" value="1"/>
</dbReference>
<dbReference type="PROSITE" id="PS00183">
    <property type="entry name" value="UBC_1"/>
    <property type="match status" value="1"/>
</dbReference>
<dbReference type="PROSITE" id="PS50127">
    <property type="entry name" value="UBC_2"/>
    <property type="match status" value="1"/>
</dbReference>
<feature type="chain" id="PRO_0000390446" description="Ubiquitin-conjugating enzyme E2 S">
    <location>
        <begin position="1"/>
        <end position="208"/>
    </location>
</feature>
<feature type="domain" description="UBC core" evidence="1">
    <location>
        <begin position="14"/>
        <end position="160"/>
    </location>
</feature>
<feature type="region of interest" description="Disordered" evidence="3">
    <location>
        <begin position="161"/>
        <end position="193"/>
    </location>
</feature>
<feature type="compositionally biased region" description="Basic and acidic residues" evidence="3">
    <location>
        <begin position="170"/>
        <end position="193"/>
    </location>
</feature>
<feature type="active site" description="Glycyl thioester intermediate" evidence="1 2">
    <location>
        <position position="98"/>
    </location>
</feature>
<keyword id="KW-0067">ATP-binding</keyword>
<keyword id="KW-0131">Cell cycle</keyword>
<keyword id="KW-0132">Cell division</keyword>
<keyword id="KW-0547">Nucleotide-binding</keyword>
<keyword id="KW-1185">Reference proteome</keyword>
<keyword id="KW-0808">Transferase</keyword>
<keyword id="KW-0833">Ubl conjugation pathway</keyword>
<proteinExistence type="inferred from homology"/>
<reference key="1">
    <citation type="journal article" date="2007" name="Nature">
        <title>Evolution of genes and genomes on the Drosophila phylogeny.</title>
        <authorList>
            <consortium name="Drosophila 12 genomes consortium"/>
        </authorList>
    </citation>
    <scope>NUCLEOTIDE SEQUENCE [LARGE SCALE GENOMIC DNA]</scope>
    <source>
        <strain>Tucson 15010-1051.87</strain>
    </source>
</reference>
<protein>
    <recommendedName>
        <fullName>Ubiquitin-conjugating enzyme E2 S</fullName>
        <ecNumber>2.3.2.23</ecNumber>
    </recommendedName>
    <alternativeName>
        <fullName>E2 ubiquitin-conjugating enzyme S</fullName>
    </alternativeName>
    <alternativeName>
        <fullName>Ubiquitin carrier protein S</fullName>
    </alternativeName>
    <alternativeName>
        <fullName>Ubiquitin-protein ligase S</fullName>
    </alternativeName>
</protein>
<comment type="function">
    <text evidence="1">Catalyzes the covalent attachment of ubiquitin to other proteins. Acts as an essential factor of the anaphase promoting complex/cyclosome (APC/C), a cell cycle-regulated ubiquitin ligase that controls progression through mitosis. Acts by specifically elongating polyubiquitin chains initiated by the E2 enzyme vih/UbcH10 on APC/C substrates, enhancing the degradation of APC/C substrates by the proteasome and promoting mitotic exit.</text>
</comment>
<comment type="catalytic activity">
    <reaction evidence="1 2">
        <text>S-ubiquitinyl-[E1 ubiquitin-activating enzyme]-L-cysteine + [E2 ubiquitin-conjugating enzyme]-L-cysteine = [E1 ubiquitin-activating enzyme]-L-cysteine + S-ubiquitinyl-[E2 ubiquitin-conjugating enzyme]-L-cysteine.</text>
        <dbReference type="EC" id="2.3.2.23"/>
    </reaction>
</comment>
<comment type="pathway">
    <text evidence="1">Protein modification; protein ubiquitination.</text>
</comment>
<comment type="similarity">
    <text evidence="1">Belongs to the ubiquitin-conjugating enzyme family.</text>
</comment>
<sequence length="208" mass="23308">MSSQYSNVENLSPQTIRQVMKELQDMETTPPEGIKVLINESDVTDIQAFIDGPAGTPYAVGVFRVKLTLSKDFPQTPPKAYFLTKIFHPNVASNGEICVNTLKKDWKPDLGIKHILLTIKCLLIVPNPESALNEEAGKMLLERYDDYSQRARMMTEIHAQPAKCGAGASDAKDDDGPSTKKHAGLDKKLQDKKKEKLLKEKKRMLKRL</sequence>
<accession>B4MA02</accession>